<dbReference type="EC" id="2.5.1.-"/>
<dbReference type="EMBL" id="AF440356">
    <property type="protein sequence ID" value="AAL34085.1"/>
    <property type="molecule type" value="mRNA"/>
</dbReference>
<dbReference type="EMBL" id="AE014134">
    <property type="protein sequence ID" value="AAF53515.1"/>
    <property type="molecule type" value="Genomic_DNA"/>
</dbReference>
<dbReference type="EMBL" id="AY061093">
    <property type="protein sequence ID" value="AAL28641.1"/>
    <property type="molecule type" value="mRNA"/>
</dbReference>
<dbReference type="RefSeq" id="NP_523581.1">
    <property type="nucleotide sequence ID" value="NM_078857.4"/>
</dbReference>
<dbReference type="SMR" id="Q9V3R8"/>
<dbReference type="BioGRID" id="60972">
    <property type="interactions" value="16"/>
</dbReference>
<dbReference type="FunCoup" id="Q9V3R8">
    <property type="interactions" value="1399"/>
</dbReference>
<dbReference type="IntAct" id="Q9V3R8">
    <property type="interactions" value="11"/>
</dbReference>
<dbReference type="STRING" id="7227.FBpp0080409"/>
<dbReference type="PaxDb" id="7227-FBpp0080409"/>
<dbReference type="DNASU" id="34961"/>
<dbReference type="EnsemblMetazoa" id="FBtr0080852">
    <property type="protein sequence ID" value="FBpp0080409"/>
    <property type="gene ID" value="FBgn0028375"/>
</dbReference>
<dbReference type="GeneID" id="34961"/>
<dbReference type="KEGG" id="dme:Dmel_CG5876"/>
<dbReference type="UCSC" id="CG5876-RA">
    <property type="organism name" value="d. melanogaster"/>
</dbReference>
<dbReference type="AGR" id="FB:FBgn0028375"/>
<dbReference type="CTD" id="34961"/>
<dbReference type="FlyBase" id="FBgn0028375">
    <property type="gene designation" value="heix"/>
</dbReference>
<dbReference type="VEuPathDB" id="VectorBase:FBgn0028375"/>
<dbReference type="eggNOG" id="KOG4581">
    <property type="taxonomic scope" value="Eukaryota"/>
</dbReference>
<dbReference type="GeneTree" id="ENSGT00390000012439"/>
<dbReference type="HOGENOM" id="CLU_043611_0_0_1"/>
<dbReference type="InParanoid" id="Q9V3R8"/>
<dbReference type="OMA" id="QWIEGAR"/>
<dbReference type="OrthoDB" id="203513at2759"/>
<dbReference type="PhylomeDB" id="Q9V3R8"/>
<dbReference type="Reactome" id="R-DME-6806664">
    <property type="pathway name" value="Metabolism of vitamin K"/>
</dbReference>
<dbReference type="UniPathway" id="UPA00079"/>
<dbReference type="BioGRID-ORCS" id="34961">
    <property type="hits" value="1 hit in 1 CRISPR screen"/>
</dbReference>
<dbReference type="GenomeRNAi" id="34961"/>
<dbReference type="PRO" id="PR:Q9V3R8"/>
<dbReference type="Proteomes" id="UP000000803">
    <property type="component" value="Chromosome 2L"/>
</dbReference>
<dbReference type="Bgee" id="FBgn0028375">
    <property type="expression patterns" value="Expressed in cleaving embryo and 48 other cell types or tissues"/>
</dbReference>
<dbReference type="GO" id="GO:0005783">
    <property type="term" value="C:endoplasmic reticulum"/>
    <property type="evidence" value="ECO:0000318"/>
    <property type="project" value="GO_Central"/>
</dbReference>
<dbReference type="GO" id="GO:0005789">
    <property type="term" value="C:endoplasmic reticulum membrane"/>
    <property type="evidence" value="ECO:0000314"/>
    <property type="project" value="FlyBase"/>
</dbReference>
<dbReference type="GO" id="GO:0000139">
    <property type="term" value="C:Golgi membrane"/>
    <property type="evidence" value="ECO:0000318"/>
    <property type="project" value="GO_Central"/>
</dbReference>
<dbReference type="GO" id="GO:0016020">
    <property type="term" value="C:membrane"/>
    <property type="evidence" value="ECO:0000250"/>
    <property type="project" value="UniProtKB"/>
</dbReference>
<dbReference type="GO" id="GO:0031966">
    <property type="term" value="C:mitochondrial membrane"/>
    <property type="evidence" value="ECO:0000314"/>
    <property type="project" value="FlyBase"/>
</dbReference>
<dbReference type="GO" id="GO:0005739">
    <property type="term" value="C:mitochondrion"/>
    <property type="evidence" value="ECO:0000314"/>
    <property type="project" value="FlyBase"/>
</dbReference>
<dbReference type="GO" id="GO:0004659">
    <property type="term" value="F:prenyltransferase activity"/>
    <property type="evidence" value="ECO:0000318"/>
    <property type="project" value="GO_Central"/>
</dbReference>
<dbReference type="GO" id="GO:0035167">
    <property type="term" value="P:larval lymph gland hemopoiesis"/>
    <property type="evidence" value="ECO:0000315"/>
    <property type="project" value="FlyBase"/>
</dbReference>
<dbReference type="GO" id="GO:0009234">
    <property type="term" value="P:menaquinone biosynthetic process"/>
    <property type="evidence" value="ECO:0000315"/>
    <property type="project" value="FlyBase"/>
</dbReference>
<dbReference type="GO" id="GO:0007005">
    <property type="term" value="P:mitochondrion organization"/>
    <property type="evidence" value="ECO:0000315"/>
    <property type="project" value="FlyBase"/>
</dbReference>
<dbReference type="GO" id="GO:0045611">
    <property type="term" value="P:negative regulation of hemocyte differentiation"/>
    <property type="evidence" value="ECO:0000315"/>
    <property type="project" value="FlyBase"/>
</dbReference>
<dbReference type="GO" id="GO:0035207">
    <property type="term" value="P:negative regulation of hemocyte proliferation"/>
    <property type="evidence" value="ECO:0000315"/>
    <property type="project" value="FlyBase"/>
</dbReference>
<dbReference type="GO" id="GO:0035204">
    <property type="term" value="P:negative regulation of lamellocyte differentiation"/>
    <property type="evidence" value="ECO:0000315"/>
    <property type="project" value="FlyBase"/>
</dbReference>
<dbReference type="GO" id="GO:0042371">
    <property type="term" value="P:vitamin K biosynthetic process"/>
    <property type="evidence" value="ECO:0000318"/>
    <property type="project" value="GO_Central"/>
</dbReference>
<dbReference type="CDD" id="cd13962">
    <property type="entry name" value="PT_UbiA_UBIAD1"/>
    <property type="match status" value="1"/>
</dbReference>
<dbReference type="FunFam" id="1.10.357.140:FF:000005">
    <property type="entry name" value="UbiA prenyltransferase domain-containing protein 1"/>
    <property type="match status" value="1"/>
</dbReference>
<dbReference type="Gene3D" id="1.10.357.140">
    <property type="entry name" value="UbiA prenyltransferase"/>
    <property type="match status" value="1"/>
</dbReference>
<dbReference type="Gene3D" id="1.20.120.1780">
    <property type="entry name" value="UbiA prenyltransferase"/>
    <property type="match status" value="1"/>
</dbReference>
<dbReference type="InterPro" id="IPR000537">
    <property type="entry name" value="UbiA_prenyltransferase"/>
</dbReference>
<dbReference type="InterPro" id="IPR044878">
    <property type="entry name" value="UbiA_sf"/>
</dbReference>
<dbReference type="InterPro" id="IPR026046">
    <property type="entry name" value="UBIAD1"/>
</dbReference>
<dbReference type="NCBIfam" id="TIGR00751">
    <property type="entry name" value="menA"/>
    <property type="match status" value="1"/>
</dbReference>
<dbReference type="PANTHER" id="PTHR13929">
    <property type="entry name" value="1,4-DIHYDROXY-2-NAPHTHOATE OCTAPRENYLTRANSFERASE"/>
    <property type="match status" value="1"/>
</dbReference>
<dbReference type="PANTHER" id="PTHR13929:SF0">
    <property type="entry name" value="UBIA PRENYLTRANSFERASE DOMAIN-CONTAINING PROTEIN 1"/>
    <property type="match status" value="1"/>
</dbReference>
<dbReference type="Pfam" id="PF01040">
    <property type="entry name" value="UbiA"/>
    <property type="match status" value="1"/>
</dbReference>
<dbReference type="PIRSF" id="PIRSF005355">
    <property type="entry name" value="UBIAD1"/>
    <property type="match status" value="1"/>
</dbReference>
<comment type="function">
    <text evidence="3">Prenyltransferase that mediates the formation of menaquinone-4 (MK-4), a vitamin K2 isoform, thereby acting as a mitochondrial electron carrier. Mediates the conversion of phylloquinone (PK) into MK-4, probably by cleaving the side chain of phylloquinone (PK) to release 2-methyl-1,4-naphthoquinone (menadione; K3) and then prenylating it with geranylgeranyl pyrophosphate (GGPP) to form MK-4. MK-4 acts as a membrane electron carrier downstream of a electron transport chain complex, improving mitochondrial oxygen consumption.</text>
</comment>
<comment type="pathway">
    <text>Quinol/quinone metabolism; menaquinone biosynthesis.</text>
</comment>
<comment type="subcellular location">
    <subcellularLocation>
        <location evidence="3">Mitochondrion membrane</location>
        <topology evidence="3">Multi-pass membrane protein</topology>
    </subcellularLocation>
</comment>
<comment type="similarity">
    <text evidence="4">Belongs to the UbiA prenyltransferase family.</text>
</comment>
<evidence type="ECO:0000255" key="1"/>
<evidence type="ECO:0000256" key="2">
    <source>
        <dbReference type="SAM" id="MobiDB-lite"/>
    </source>
</evidence>
<evidence type="ECO:0000269" key="3">
    <source>
    </source>
</evidence>
<evidence type="ECO:0000305" key="4"/>
<sequence length="359" mass="39216">MATSSQLLPNGNLSRNGKTKTEDGEEVEAVVGARAAGADAGVALTGRLTGHPSTSGTFMKLKTYLLALRPWSLSASLVPTLLGSALAYRSQWAEEFSLATFFLTAFTVVTVHCAGNVVNTYFDFIKGIDKQKADDRTLVDHILTKDEVVSLGAILYMAGCGGFVLLAVLSPAKMEHLALIYFGGLSSSFLYTGGIGFKYIALGDLVILILFGPISVLFAFMSQTGHLDWTTMGYAIPLALNTEAILHSNNTRDADNDRRAGIVTLAILIGRTASHVLYAMLLFAPYSLFFIFGLKYSLWFLLPLVTLPQAFQIEKRFRNEQTMHLVPRQTAKLNFFFGILYVVACCCAHQLPTFGLRRN</sequence>
<accession>Q9V3R8</accession>
<feature type="chain" id="PRO_0000242631" description="UbiA prenyltransferase domain-containing protein 1 homolog">
    <location>
        <begin position="1"/>
        <end position="359"/>
    </location>
</feature>
<feature type="transmembrane region" description="Helical" evidence="1">
    <location>
        <begin position="67"/>
        <end position="89"/>
    </location>
</feature>
<feature type="transmembrane region" description="Helical" evidence="1">
    <location>
        <begin position="98"/>
        <end position="118"/>
    </location>
</feature>
<feature type="transmembrane region" description="Helical" evidence="1">
    <location>
        <begin position="148"/>
        <end position="168"/>
    </location>
</feature>
<feature type="transmembrane region" description="Helical" evidence="1">
    <location>
        <begin position="177"/>
        <end position="197"/>
    </location>
</feature>
<feature type="transmembrane region" description="Helical" evidence="1">
    <location>
        <begin position="200"/>
        <end position="220"/>
    </location>
</feature>
<feature type="transmembrane region" description="Helical" evidence="1">
    <location>
        <begin position="262"/>
        <end position="284"/>
    </location>
</feature>
<feature type="transmembrane region" description="Helical" evidence="1">
    <location>
        <begin position="289"/>
        <end position="311"/>
    </location>
</feature>
<feature type="transmembrane region" description="Helical" evidence="1">
    <location>
        <begin position="335"/>
        <end position="355"/>
    </location>
</feature>
<feature type="region of interest" description="Disordered" evidence="2">
    <location>
        <begin position="1"/>
        <end position="23"/>
    </location>
</feature>
<feature type="compositionally biased region" description="Polar residues" evidence="2">
    <location>
        <begin position="1"/>
        <end position="16"/>
    </location>
</feature>
<keyword id="KW-0472">Membrane</keyword>
<keyword id="KW-0474">Menaquinone biosynthesis</keyword>
<keyword id="KW-0496">Mitochondrion</keyword>
<keyword id="KW-0637">Prenyltransferase</keyword>
<keyword id="KW-1185">Reference proteome</keyword>
<keyword id="KW-0808">Transferase</keyword>
<keyword id="KW-0812">Transmembrane</keyword>
<keyword id="KW-1133">Transmembrane helix</keyword>
<gene>
    <name type="primary">heix</name>
    <name type="ORF">CG5876</name>
</gene>
<protein>
    <recommendedName>
        <fullName>UbiA prenyltransferase domain-containing protein 1 homolog</fullName>
        <ecNumber>2.5.1.-</ecNumber>
    </recommendedName>
    <alternativeName>
        <fullName>Protein heixuedian</fullName>
    </alternativeName>
</protein>
<proteinExistence type="evidence at transcript level"/>
<name>UBIA1_DROME</name>
<organism>
    <name type="scientific">Drosophila melanogaster</name>
    <name type="common">Fruit fly</name>
    <dbReference type="NCBI Taxonomy" id="7227"/>
    <lineage>
        <taxon>Eukaryota</taxon>
        <taxon>Metazoa</taxon>
        <taxon>Ecdysozoa</taxon>
        <taxon>Arthropoda</taxon>
        <taxon>Hexapoda</taxon>
        <taxon>Insecta</taxon>
        <taxon>Pterygota</taxon>
        <taxon>Neoptera</taxon>
        <taxon>Endopterygota</taxon>
        <taxon>Diptera</taxon>
        <taxon>Brachycera</taxon>
        <taxon>Muscomorpha</taxon>
        <taxon>Ephydroidea</taxon>
        <taxon>Drosophilidae</taxon>
        <taxon>Drosophila</taxon>
        <taxon>Sophophora</taxon>
    </lineage>
</organism>
<reference key="1">
    <citation type="submission" date="2001-10" db="EMBL/GenBank/DDBJ databases">
        <title>Full length sequencing of the BI357486/BI234095 clone containing the open reading frame and 3' end of Drosophila heix.</title>
        <authorList>
            <person name="McGarvey T.W."/>
            <person name="Malkowicz S.B."/>
        </authorList>
    </citation>
    <scope>NUCLEOTIDE SEQUENCE [MRNA]</scope>
</reference>
<reference key="2">
    <citation type="journal article" date="2000" name="Science">
        <title>The genome sequence of Drosophila melanogaster.</title>
        <authorList>
            <person name="Adams M.D."/>
            <person name="Celniker S.E."/>
            <person name="Holt R.A."/>
            <person name="Evans C.A."/>
            <person name="Gocayne J.D."/>
            <person name="Amanatides P.G."/>
            <person name="Scherer S.E."/>
            <person name="Li P.W."/>
            <person name="Hoskins R.A."/>
            <person name="Galle R.F."/>
            <person name="George R.A."/>
            <person name="Lewis S.E."/>
            <person name="Richards S."/>
            <person name="Ashburner M."/>
            <person name="Henderson S.N."/>
            <person name="Sutton G.G."/>
            <person name="Wortman J.R."/>
            <person name="Yandell M.D."/>
            <person name="Zhang Q."/>
            <person name="Chen L.X."/>
            <person name="Brandon R.C."/>
            <person name="Rogers Y.-H.C."/>
            <person name="Blazej R.G."/>
            <person name="Champe M."/>
            <person name="Pfeiffer B.D."/>
            <person name="Wan K.H."/>
            <person name="Doyle C."/>
            <person name="Baxter E.G."/>
            <person name="Helt G."/>
            <person name="Nelson C.R."/>
            <person name="Miklos G.L.G."/>
            <person name="Abril J.F."/>
            <person name="Agbayani A."/>
            <person name="An H.-J."/>
            <person name="Andrews-Pfannkoch C."/>
            <person name="Baldwin D."/>
            <person name="Ballew R.M."/>
            <person name="Basu A."/>
            <person name="Baxendale J."/>
            <person name="Bayraktaroglu L."/>
            <person name="Beasley E.M."/>
            <person name="Beeson K.Y."/>
            <person name="Benos P.V."/>
            <person name="Berman B.P."/>
            <person name="Bhandari D."/>
            <person name="Bolshakov S."/>
            <person name="Borkova D."/>
            <person name="Botchan M.R."/>
            <person name="Bouck J."/>
            <person name="Brokstein P."/>
            <person name="Brottier P."/>
            <person name="Burtis K.C."/>
            <person name="Busam D.A."/>
            <person name="Butler H."/>
            <person name="Cadieu E."/>
            <person name="Center A."/>
            <person name="Chandra I."/>
            <person name="Cherry J.M."/>
            <person name="Cawley S."/>
            <person name="Dahlke C."/>
            <person name="Davenport L.B."/>
            <person name="Davies P."/>
            <person name="de Pablos B."/>
            <person name="Delcher A."/>
            <person name="Deng Z."/>
            <person name="Mays A.D."/>
            <person name="Dew I."/>
            <person name="Dietz S.M."/>
            <person name="Dodson K."/>
            <person name="Doup L.E."/>
            <person name="Downes M."/>
            <person name="Dugan-Rocha S."/>
            <person name="Dunkov B.C."/>
            <person name="Dunn P."/>
            <person name="Durbin K.J."/>
            <person name="Evangelista C.C."/>
            <person name="Ferraz C."/>
            <person name="Ferriera S."/>
            <person name="Fleischmann W."/>
            <person name="Fosler C."/>
            <person name="Gabrielian A.E."/>
            <person name="Garg N.S."/>
            <person name="Gelbart W.M."/>
            <person name="Glasser K."/>
            <person name="Glodek A."/>
            <person name="Gong F."/>
            <person name="Gorrell J.H."/>
            <person name="Gu Z."/>
            <person name="Guan P."/>
            <person name="Harris M."/>
            <person name="Harris N.L."/>
            <person name="Harvey D.A."/>
            <person name="Heiman T.J."/>
            <person name="Hernandez J.R."/>
            <person name="Houck J."/>
            <person name="Hostin D."/>
            <person name="Houston K.A."/>
            <person name="Howland T.J."/>
            <person name="Wei M.-H."/>
            <person name="Ibegwam C."/>
            <person name="Jalali M."/>
            <person name="Kalush F."/>
            <person name="Karpen G.H."/>
            <person name="Ke Z."/>
            <person name="Kennison J.A."/>
            <person name="Ketchum K.A."/>
            <person name="Kimmel B.E."/>
            <person name="Kodira C.D."/>
            <person name="Kraft C.L."/>
            <person name="Kravitz S."/>
            <person name="Kulp D."/>
            <person name="Lai Z."/>
            <person name="Lasko P."/>
            <person name="Lei Y."/>
            <person name="Levitsky A.A."/>
            <person name="Li J.H."/>
            <person name="Li Z."/>
            <person name="Liang Y."/>
            <person name="Lin X."/>
            <person name="Liu X."/>
            <person name="Mattei B."/>
            <person name="McIntosh T.C."/>
            <person name="McLeod M.P."/>
            <person name="McPherson D."/>
            <person name="Merkulov G."/>
            <person name="Milshina N.V."/>
            <person name="Mobarry C."/>
            <person name="Morris J."/>
            <person name="Moshrefi A."/>
            <person name="Mount S.M."/>
            <person name="Moy M."/>
            <person name="Murphy B."/>
            <person name="Murphy L."/>
            <person name="Muzny D.M."/>
            <person name="Nelson D.L."/>
            <person name="Nelson D.R."/>
            <person name="Nelson K.A."/>
            <person name="Nixon K."/>
            <person name="Nusskern D.R."/>
            <person name="Pacleb J.M."/>
            <person name="Palazzolo M."/>
            <person name="Pittman G.S."/>
            <person name="Pan S."/>
            <person name="Pollard J."/>
            <person name="Puri V."/>
            <person name="Reese M.G."/>
            <person name="Reinert K."/>
            <person name="Remington K."/>
            <person name="Saunders R.D.C."/>
            <person name="Scheeler F."/>
            <person name="Shen H."/>
            <person name="Shue B.C."/>
            <person name="Siden-Kiamos I."/>
            <person name="Simpson M."/>
            <person name="Skupski M.P."/>
            <person name="Smith T.J."/>
            <person name="Spier E."/>
            <person name="Spradling A.C."/>
            <person name="Stapleton M."/>
            <person name="Strong R."/>
            <person name="Sun E."/>
            <person name="Svirskas R."/>
            <person name="Tector C."/>
            <person name="Turner R."/>
            <person name="Venter E."/>
            <person name="Wang A.H."/>
            <person name="Wang X."/>
            <person name="Wang Z.-Y."/>
            <person name="Wassarman D.A."/>
            <person name="Weinstock G.M."/>
            <person name="Weissenbach J."/>
            <person name="Williams S.M."/>
            <person name="Woodage T."/>
            <person name="Worley K.C."/>
            <person name="Wu D."/>
            <person name="Yang S."/>
            <person name="Yao Q.A."/>
            <person name="Ye J."/>
            <person name="Yeh R.-F."/>
            <person name="Zaveri J.S."/>
            <person name="Zhan M."/>
            <person name="Zhang G."/>
            <person name="Zhao Q."/>
            <person name="Zheng L."/>
            <person name="Zheng X.H."/>
            <person name="Zhong F.N."/>
            <person name="Zhong W."/>
            <person name="Zhou X."/>
            <person name="Zhu S.C."/>
            <person name="Zhu X."/>
            <person name="Smith H.O."/>
            <person name="Gibbs R.A."/>
            <person name="Myers E.W."/>
            <person name="Rubin G.M."/>
            <person name="Venter J.C."/>
        </authorList>
    </citation>
    <scope>NUCLEOTIDE SEQUENCE [LARGE SCALE GENOMIC DNA]</scope>
    <source>
        <strain>Berkeley</strain>
    </source>
</reference>
<reference key="3">
    <citation type="journal article" date="2002" name="Genome Biol.">
        <title>Annotation of the Drosophila melanogaster euchromatic genome: a systematic review.</title>
        <authorList>
            <person name="Misra S."/>
            <person name="Crosby M.A."/>
            <person name="Mungall C.J."/>
            <person name="Matthews B.B."/>
            <person name="Campbell K.S."/>
            <person name="Hradecky P."/>
            <person name="Huang Y."/>
            <person name="Kaminker J.S."/>
            <person name="Millburn G.H."/>
            <person name="Prochnik S.E."/>
            <person name="Smith C.D."/>
            <person name="Tupy J.L."/>
            <person name="Whitfield E.J."/>
            <person name="Bayraktaroglu L."/>
            <person name="Berman B.P."/>
            <person name="Bettencourt B.R."/>
            <person name="Celniker S.E."/>
            <person name="de Grey A.D.N.J."/>
            <person name="Drysdale R.A."/>
            <person name="Harris N.L."/>
            <person name="Richter J."/>
            <person name="Russo S."/>
            <person name="Schroeder A.J."/>
            <person name="Shu S.Q."/>
            <person name="Stapleton M."/>
            <person name="Yamada C."/>
            <person name="Ashburner M."/>
            <person name="Gelbart W.M."/>
            <person name="Rubin G.M."/>
            <person name="Lewis S.E."/>
        </authorList>
    </citation>
    <scope>GENOME REANNOTATION</scope>
    <source>
        <strain>Berkeley</strain>
    </source>
</reference>
<reference key="4">
    <citation type="journal article" date="2002" name="Genome Biol.">
        <title>A Drosophila full-length cDNA resource.</title>
        <authorList>
            <person name="Stapleton M."/>
            <person name="Carlson J.W."/>
            <person name="Brokstein P."/>
            <person name="Yu C."/>
            <person name="Champe M."/>
            <person name="George R.A."/>
            <person name="Guarin H."/>
            <person name="Kronmiller B."/>
            <person name="Pacleb J.M."/>
            <person name="Park S."/>
            <person name="Wan K.H."/>
            <person name="Rubin G.M."/>
            <person name="Celniker S.E."/>
        </authorList>
    </citation>
    <scope>NUCLEOTIDE SEQUENCE [LARGE SCALE MRNA]</scope>
    <source>
        <strain>Berkeley</strain>
        <tissue>Embryo</tissue>
    </source>
</reference>
<reference key="5">
    <citation type="journal article" date="2012" name="Science">
        <title>Vitamin K2 is a mitochondrial electron carrier that rescues pink1 deficiency.</title>
        <authorList>
            <person name="Vos M."/>
            <person name="Esposito G."/>
            <person name="Edirisinghe J.N."/>
            <person name="Vilain S."/>
            <person name="Haddad D.M."/>
            <person name="Slabbaert J.R."/>
            <person name="Van Meensel S."/>
            <person name="Schaap O."/>
            <person name="De Strooper B."/>
            <person name="Meganathan R."/>
            <person name="Morais V.A."/>
            <person name="Verstreken P."/>
        </authorList>
    </citation>
    <scope>FUNCTION</scope>
    <scope>SUBCELLULAR LOCATION</scope>
</reference>